<comment type="function">
    <text evidence="1">Involved in protein export. Acts as a chaperone by maintaining the newly synthesized protein in an open conformation. Functions as a peptidyl-prolyl cis-trans isomerase.</text>
</comment>
<comment type="catalytic activity">
    <reaction evidence="1">
        <text>[protein]-peptidylproline (omega=180) = [protein]-peptidylproline (omega=0)</text>
        <dbReference type="Rhea" id="RHEA:16237"/>
        <dbReference type="Rhea" id="RHEA-COMP:10747"/>
        <dbReference type="Rhea" id="RHEA-COMP:10748"/>
        <dbReference type="ChEBI" id="CHEBI:83833"/>
        <dbReference type="ChEBI" id="CHEBI:83834"/>
        <dbReference type="EC" id="5.2.1.8"/>
    </reaction>
</comment>
<comment type="subcellular location">
    <subcellularLocation>
        <location>Cytoplasm</location>
    </subcellularLocation>
    <text evidence="1">About half TF is bound to the ribosome near the polypeptide exit tunnel while the other half is free in the cytoplasm.</text>
</comment>
<comment type="domain">
    <text evidence="1">Consists of 3 domains; the N-terminus binds the ribosome, the middle domain has PPIase activity, while the C-terminus has intrinsic chaperone activity on its own.</text>
</comment>
<comment type="similarity">
    <text evidence="1">Belongs to the FKBP-type PPIase family. Tig subfamily.</text>
</comment>
<gene>
    <name evidence="1" type="primary">tig</name>
    <name type="ordered locus">BMA10229_A3347</name>
</gene>
<dbReference type="EC" id="5.2.1.8" evidence="1"/>
<dbReference type="EMBL" id="CP000546">
    <property type="protein sequence ID" value="ABN02914.1"/>
    <property type="molecule type" value="Genomic_DNA"/>
</dbReference>
<dbReference type="RefSeq" id="WP_004193941.1">
    <property type="nucleotide sequence ID" value="NC_008836.1"/>
</dbReference>
<dbReference type="SMR" id="A2SBG2"/>
<dbReference type="GeneID" id="92979197"/>
<dbReference type="KEGG" id="bml:BMA10229_A3347"/>
<dbReference type="HOGENOM" id="CLU_033058_2_0_4"/>
<dbReference type="Proteomes" id="UP000002283">
    <property type="component" value="Chromosome I"/>
</dbReference>
<dbReference type="GO" id="GO:0005737">
    <property type="term" value="C:cytoplasm"/>
    <property type="evidence" value="ECO:0007669"/>
    <property type="project" value="UniProtKB-SubCell"/>
</dbReference>
<dbReference type="GO" id="GO:0003755">
    <property type="term" value="F:peptidyl-prolyl cis-trans isomerase activity"/>
    <property type="evidence" value="ECO:0007669"/>
    <property type="project" value="UniProtKB-UniRule"/>
</dbReference>
<dbReference type="GO" id="GO:0044183">
    <property type="term" value="F:protein folding chaperone"/>
    <property type="evidence" value="ECO:0007669"/>
    <property type="project" value="TreeGrafter"/>
</dbReference>
<dbReference type="GO" id="GO:0043022">
    <property type="term" value="F:ribosome binding"/>
    <property type="evidence" value="ECO:0007669"/>
    <property type="project" value="TreeGrafter"/>
</dbReference>
<dbReference type="GO" id="GO:0051083">
    <property type="term" value="P:'de novo' cotranslational protein folding"/>
    <property type="evidence" value="ECO:0007669"/>
    <property type="project" value="TreeGrafter"/>
</dbReference>
<dbReference type="GO" id="GO:0051301">
    <property type="term" value="P:cell division"/>
    <property type="evidence" value="ECO:0007669"/>
    <property type="project" value="UniProtKB-KW"/>
</dbReference>
<dbReference type="GO" id="GO:0061077">
    <property type="term" value="P:chaperone-mediated protein folding"/>
    <property type="evidence" value="ECO:0007669"/>
    <property type="project" value="TreeGrafter"/>
</dbReference>
<dbReference type="GO" id="GO:0015031">
    <property type="term" value="P:protein transport"/>
    <property type="evidence" value="ECO:0007669"/>
    <property type="project" value="UniProtKB-UniRule"/>
</dbReference>
<dbReference type="GO" id="GO:0043335">
    <property type="term" value="P:protein unfolding"/>
    <property type="evidence" value="ECO:0007669"/>
    <property type="project" value="TreeGrafter"/>
</dbReference>
<dbReference type="FunFam" id="3.10.50.40:FF:000001">
    <property type="entry name" value="Trigger factor"/>
    <property type="match status" value="1"/>
</dbReference>
<dbReference type="Gene3D" id="3.10.50.40">
    <property type="match status" value="1"/>
</dbReference>
<dbReference type="Gene3D" id="3.30.70.1050">
    <property type="entry name" value="Trigger factor ribosome-binding domain"/>
    <property type="match status" value="1"/>
</dbReference>
<dbReference type="Gene3D" id="1.10.3120.10">
    <property type="entry name" value="Trigger factor, C-terminal domain"/>
    <property type="match status" value="1"/>
</dbReference>
<dbReference type="HAMAP" id="MF_00303">
    <property type="entry name" value="Trigger_factor_Tig"/>
    <property type="match status" value="1"/>
</dbReference>
<dbReference type="InterPro" id="IPR046357">
    <property type="entry name" value="PPIase_dom_sf"/>
</dbReference>
<dbReference type="InterPro" id="IPR001179">
    <property type="entry name" value="PPIase_FKBP_dom"/>
</dbReference>
<dbReference type="InterPro" id="IPR005215">
    <property type="entry name" value="Trig_fac"/>
</dbReference>
<dbReference type="InterPro" id="IPR008880">
    <property type="entry name" value="Trigger_fac_C"/>
</dbReference>
<dbReference type="InterPro" id="IPR037041">
    <property type="entry name" value="Trigger_fac_C_sf"/>
</dbReference>
<dbReference type="InterPro" id="IPR008881">
    <property type="entry name" value="Trigger_fac_ribosome-bd_bac"/>
</dbReference>
<dbReference type="InterPro" id="IPR036611">
    <property type="entry name" value="Trigger_fac_ribosome-bd_sf"/>
</dbReference>
<dbReference type="InterPro" id="IPR027304">
    <property type="entry name" value="Trigger_fact/SurA_dom_sf"/>
</dbReference>
<dbReference type="NCBIfam" id="TIGR00115">
    <property type="entry name" value="tig"/>
    <property type="match status" value="1"/>
</dbReference>
<dbReference type="PANTHER" id="PTHR30560">
    <property type="entry name" value="TRIGGER FACTOR CHAPERONE AND PEPTIDYL-PROLYL CIS/TRANS ISOMERASE"/>
    <property type="match status" value="1"/>
</dbReference>
<dbReference type="PANTHER" id="PTHR30560:SF3">
    <property type="entry name" value="TRIGGER FACTOR-LIKE PROTEIN TIG, CHLOROPLASTIC"/>
    <property type="match status" value="1"/>
</dbReference>
<dbReference type="Pfam" id="PF00254">
    <property type="entry name" value="FKBP_C"/>
    <property type="match status" value="1"/>
</dbReference>
<dbReference type="Pfam" id="PF05698">
    <property type="entry name" value="Trigger_C"/>
    <property type="match status" value="1"/>
</dbReference>
<dbReference type="Pfam" id="PF05697">
    <property type="entry name" value="Trigger_N"/>
    <property type="match status" value="1"/>
</dbReference>
<dbReference type="PIRSF" id="PIRSF003095">
    <property type="entry name" value="Trigger_factor"/>
    <property type="match status" value="1"/>
</dbReference>
<dbReference type="SUPFAM" id="SSF54534">
    <property type="entry name" value="FKBP-like"/>
    <property type="match status" value="1"/>
</dbReference>
<dbReference type="SUPFAM" id="SSF109998">
    <property type="entry name" value="Triger factor/SurA peptide-binding domain-like"/>
    <property type="match status" value="1"/>
</dbReference>
<dbReference type="SUPFAM" id="SSF102735">
    <property type="entry name" value="Trigger factor ribosome-binding domain"/>
    <property type="match status" value="1"/>
</dbReference>
<dbReference type="PROSITE" id="PS50059">
    <property type="entry name" value="FKBP_PPIASE"/>
    <property type="match status" value="1"/>
</dbReference>
<accession>A2SBG2</accession>
<keyword id="KW-0131">Cell cycle</keyword>
<keyword id="KW-0132">Cell division</keyword>
<keyword id="KW-0143">Chaperone</keyword>
<keyword id="KW-0963">Cytoplasm</keyword>
<keyword id="KW-0413">Isomerase</keyword>
<keyword id="KW-0697">Rotamase</keyword>
<sequence>MANVVENLGKLERRVTISLPKDVVQKEIDARIQKLAKNVRMPGFRPGKVPLKMVAQQYAGQVEAEVLSDKIGQEFFTISRAENLRVAGQPSFAPKEDTQQESAYAFDATFEVYPEVKIGDLATAEVERSTTTIGDAEIDRTLDILRKQRVHFHARGEGGEHGDGGADTAAQNGDRVTVDFVGKIDGVAFQGGTAEDFVFVLGEGRMLPEFETAALGLKAGESREFDLKFPDDYHGKDVAGKTAQFTVTLKKVEWPHLPEIDADFAKSLGVEDGDLTKMRAEIKENLEREAKRRTQSIVKNQVMDALLKISELDVPKALIEQDQQRLVEMARQDLAQRGVPNAKDAPIPAEMFADQAERRVKLGLVLAELVKANGLEAKPEQIRAEVDEFAKSYEDPKEVVRWYYSNQQRLAEMEAFVVESNVVDFVLGKAKVTDKEVSFEALASATAQA</sequence>
<proteinExistence type="inferred from homology"/>
<reference key="1">
    <citation type="journal article" date="2010" name="Genome Biol. Evol.">
        <title>Continuing evolution of Burkholderia mallei through genome reduction and large-scale rearrangements.</title>
        <authorList>
            <person name="Losada L."/>
            <person name="Ronning C.M."/>
            <person name="DeShazer D."/>
            <person name="Woods D."/>
            <person name="Fedorova N."/>
            <person name="Kim H.S."/>
            <person name="Shabalina S.A."/>
            <person name="Pearson T.R."/>
            <person name="Brinkac L."/>
            <person name="Tan P."/>
            <person name="Nandi T."/>
            <person name="Crabtree J."/>
            <person name="Badger J."/>
            <person name="Beckstrom-Sternberg S."/>
            <person name="Saqib M."/>
            <person name="Schutzer S.E."/>
            <person name="Keim P."/>
            <person name="Nierman W.C."/>
        </authorList>
    </citation>
    <scope>NUCLEOTIDE SEQUENCE [LARGE SCALE GENOMIC DNA]</scope>
    <source>
        <strain>NCTC 10229</strain>
    </source>
</reference>
<feature type="chain" id="PRO_1000022654" description="Trigger factor">
    <location>
        <begin position="1"/>
        <end position="449"/>
    </location>
</feature>
<feature type="domain" description="PPIase FKBP-type" evidence="1">
    <location>
        <begin position="173"/>
        <end position="258"/>
    </location>
</feature>
<name>TIG_BURM9</name>
<evidence type="ECO:0000255" key="1">
    <source>
        <dbReference type="HAMAP-Rule" id="MF_00303"/>
    </source>
</evidence>
<protein>
    <recommendedName>
        <fullName evidence="1">Trigger factor</fullName>
        <shortName evidence="1">TF</shortName>
        <ecNumber evidence="1">5.2.1.8</ecNumber>
    </recommendedName>
    <alternativeName>
        <fullName evidence="1">PPIase</fullName>
    </alternativeName>
</protein>
<organism>
    <name type="scientific">Burkholderia mallei (strain NCTC 10229)</name>
    <dbReference type="NCBI Taxonomy" id="412022"/>
    <lineage>
        <taxon>Bacteria</taxon>
        <taxon>Pseudomonadati</taxon>
        <taxon>Pseudomonadota</taxon>
        <taxon>Betaproteobacteria</taxon>
        <taxon>Burkholderiales</taxon>
        <taxon>Burkholderiaceae</taxon>
        <taxon>Burkholderia</taxon>
        <taxon>pseudomallei group</taxon>
    </lineage>
</organism>